<gene>
    <name evidence="1" type="primary">pyrB</name>
    <name type="ordered locus">USA300HOU_1138</name>
</gene>
<keyword id="KW-0665">Pyrimidine biosynthesis</keyword>
<keyword id="KW-0808">Transferase</keyword>
<protein>
    <recommendedName>
        <fullName evidence="1">Aspartate carbamoyltransferase catalytic subunit</fullName>
        <ecNumber evidence="1">2.1.3.2</ecNumber>
    </recommendedName>
    <alternativeName>
        <fullName evidence="1">Aspartate transcarbamylase</fullName>
        <shortName evidence="1">ATCase</shortName>
    </alternativeName>
</protein>
<organism>
    <name type="scientific">Staphylococcus aureus (strain USA300 / TCH1516)</name>
    <dbReference type="NCBI Taxonomy" id="451516"/>
    <lineage>
        <taxon>Bacteria</taxon>
        <taxon>Bacillati</taxon>
        <taxon>Bacillota</taxon>
        <taxon>Bacilli</taxon>
        <taxon>Bacillales</taxon>
        <taxon>Staphylococcaceae</taxon>
        <taxon>Staphylococcus</taxon>
    </lineage>
</organism>
<reference key="1">
    <citation type="journal article" date="2007" name="BMC Microbiol.">
        <title>Subtle genetic changes enhance virulence of methicillin resistant and sensitive Staphylococcus aureus.</title>
        <authorList>
            <person name="Highlander S.K."/>
            <person name="Hulten K.G."/>
            <person name="Qin X."/>
            <person name="Jiang H."/>
            <person name="Yerrapragada S."/>
            <person name="Mason E.O. Jr."/>
            <person name="Shang Y."/>
            <person name="Williams T.M."/>
            <person name="Fortunov R.M."/>
            <person name="Liu Y."/>
            <person name="Igboeli O."/>
            <person name="Petrosino J."/>
            <person name="Tirumalai M."/>
            <person name="Uzman A."/>
            <person name="Fox G.E."/>
            <person name="Cardenas A.M."/>
            <person name="Muzny D.M."/>
            <person name="Hemphill L."/>
            <person name="Ding Y."/>
            <person name="Dugan S."/>
            <person name="Blyth P.R."/>
            <person name="Buhay C.J."/>
            <person name="Dinh H.H."/>
            <person name="Hawes A.C."/>
            <person name="Holder M."/>
            <person name="Kovar C.L."/>
            <person name="Lee S.L."/>
            <person name="Liu W."/>
            <person name="Nazareth L.V."/>
            <person name="Wang Q."/>
            <person name="Zhou J."/>
            <person name="Kaplan S.L."/>
            <person name="Weinstock G.M."/>
        </authorList>
    </citation>
    <scope>NUCLEOTIDE SEQUENCE [LARGE SCALE GENOMIC DNA]</scope>
    <source>
        <strain>USA300 / TCH1516</strain>
    </source>
</reference>
<sequence>MNHLLSMEHLSTDQIYKLIQKASQFKSGERQLPNFEGKYVANLFFENSTRTKCSFEMAELKLGLKTISFETSTSSVSKGESLYDTCKTLESIGCDLLVIRHPFNNYYEKLANINIPIANAGDGSGQHPTQSLLDLMTIYEEYGYFEGLNVLICGDIKNSRVARSNYHSLKALGANVMFNSPNAWIDDSLEAPYVNIDDVIETVDIVMLLRIQHERHGLAEETRFAADDYHQKHGLNEVRYNKLQEHAIVMHPAPVNRGVEIQSDLVEASKSRIFKQMENGVYLRMAVIDELLK</sequence>
<feature type="chain" id="PRO_1000073743" description="Aspartate carbamoyltransferase catalytic subunit">
    <location>
        <begin position="1"/>
        <end position="293"/>
    </location>
</feature>
<feature type="binding site" evidence="1">
    <location>
        <position position="50"/>
    </location>
    <ligand>
        <name>carbamoyl phosphate</name>
        <dbReference type="ChEBI" id="CHEBI:58228"/>
    </ligand>
</feature>
<feature type="binding site" evidence="1">
    <location>
        <position position="51"/>
    </location>
    <ligand>
        <name>carbamoyl phosphate</name>
        <dbReference type="ChEBI" id="CHEBI:58228"/>
    </ligand>
</feature>
<feature type="binding site" evidence="1">
    <location>
        <position position="78"/>
    </location>
    <ligand>
        <name>L-aspartate</name>
        <dbReference type="ChEBI" id="CHEBI:29991"/>
    </ligand>
</feature>
<feature type="binding site" evidence="1">
    <location>
        <position position="100"/>
    </location>
    <ligand>
        <name>carbamoyl phosphate</name>
        <dbReference type="ChEBI" id="CHEBI:58228"/>
    </ligand>
</feature>
<feature type="binding site" evidence="1">
    <location>
        <position position="127"/>
    </location>
    <ligand>
        <name>carbamoyl phosphate</name>
        <dbReference type="ChEBI" id="CHEBI:58228"/>
    </ligand>
</feature>
<feature type="binding site" evidence="1">
    <location>
        <position position="130"/>
    </location>
    <ligand>
        <name>carbamoyl phosphate</name>
        <dbReference type="ChEBI" id="CHEBI:58228"/>
    </ligand>
</feature>
<feature type="binding site" evidence="1">
    <location>
        <position position="160"/>
    </location>
    <ligand>
        <name>L-aspartate</name>
        <dbReference type="ChEBI" id="CHEBI:29991"/>
    </ligand>
</feature>
<feature type="binding site" evidence="1">
    <location>
        <position position="210"/>
    </location>
    <ligand>
        <name>L-aspartate</name>
        <dbReference type="ChEBI" id="CHEBI:29991"/>
    </ligand>
</feature>
<feature type="binding site" evidence="1">
    <location>
        <position position="253"/>
    </location>
    <ligand>
        <name>carbamoyl phosphate</name>
        <dbReference type="ChEBI" id="CHEBI:58228"/>
    </ligand>
</feature>
<feature type="binding site" evidence="1">
    <location>
        <position position="254"/>
    </location>
    <ligand>
        <name>carbamoyl phosphate</name>
        <dbReference type="ChEBI" id="CHEBI:58228"/>
    </ligand>
</feature>
<comment type="function">
    <text evidence="1">Catalyzes the condensation of carbamoyl phosphate and aspartate to form carbamoyl aspartate and inorganic phosphate, the committed step in the de novo pyrimidine nucleotide biosynthesis pathway.</text>
</comment>
<comment type="catalytic activity">
    <reaction evidence="1">
        <text>carbamoyl phosphate + L-aspartate = N-carbamoyl-L-aspartate + phosphate + H(+)</text>
        <dbReference type="Rhea" id="RHEA:20013"/>
        <dbReference type="ChEBI" id="CHEBI:15378"/>
        <dbReference type="ChEBI" id="CHEBI:29991"/>
        <dbReference type="ChEBI" id="CHEBI:32814"/>
        <dbReference type="ChEBI" id="CHEBI:43474"/>
        <dbReference type="ChEBI" id="CHEBI:58228"/>
        <dbReference type="EC" id="2.1.3.2"/>
    </reaction>
</comment>
<comment type="pathway">
    <text evidence="1">Pyrimidine metabolism; UMP biosynthesis via de novo pathway; (S)-dihydroorotate from bicarbonate: step 2/3.</text>
</comment>
<comment type="subunit">
    <text evidence="1">Heterododecamer (2C3:3R2) of six catalytic PyrB chains organized as two trimers (C3), and six regulatory PyrI chains organized as three dimers (R2).</text>
</comment>
<comment type="similarity">
    <text evidence="1">Belongs to the aspartate/ornithine carbamoyltransferase superfamily. ATCase family.</text>
</comment>
<evidence type="ECO:0000255" key="1">
    <source>
        <dbReference type="HAMAP-Rule" id="MF_00001"/>
    </source>
</evidence>
<name>PYRB_STAAT</name>
<proteinExistence type="inferred from homology"/>
<accession>A8Z3N7</accession>
<dbReference type="EC" id="2.1.3.2" evidence="1"/>
<dbReference type="EMBL" id="CP000730">
    <property type="protein sequence ID" value="ABX29153.1"/>
    <property type="molecule type" value="Genomic_DNA"/>
</dbReference>
<dbReference type="RefSeq" id="WP_001016166.1">
    <property type="nucleotide sequence ID" value="NC_010079.1"/>
</dbReference>
<dbReference type="SMR" id="A8Z3N7"/>
<dbReference type="KEGG" id="sax:USA300HOU_1138"/>
<dbReference type="HOGENOM" id="CLU_043846_2_1_9"/>
<dbReference type="UniPathway" id="UPA00070">
    <property type="reaction ID" value="UER00116"/>
</dbReference>
<dbReference type="GO" id="GO:0005829">
    <property type="term" value="C:cytosol"/>
    <property type="evidence" value="ECO:0007669"/>
    <property type="project" value="TreeGrafter"/>
</dbReference>
<dbReference type="GO" id="GO:0016597">
    <property type="term" value="F:amino acid binding"/>
    <property type="evidence" value="ECO:0007669"/>
    <property type="project" value="InterPro"/>
</dbReference>
<dbReference type="GO" id="GO:0004070">
    <property type="term" value="F:aspartate carbamoyltransferase activity"/>
    <property type="evidence" value="ECO:0007669"/>
    <property type="project" value="UniProtKB-UniRule"/>
</dbReference>
<dbReference type="GO" id="GO:0006207">
    <property type="term" value="P:'de novo' pyrimidine nucleobase biosynthetic process"/>
    <property type="evidence" value="ECO:0007669"/>
    <property type="project" value="InterPro"/>
</dbReference>
<dbReference type="GO" id="GO:0044205">
    <property type="term" value="P:'de novo' UMP biosynthetic process"/>
    <property type="evidence" value="ECO:0007669"/>
    <property type="project" value="UniProtKB-UniRule"/>
</dbReference>
<dbReference type="GO" id="GO:0006520">
    <property type="term" value="P:amino acid metabolic process"/>
    <property type="evidence" value="ECO:0007669"/>
    <property type="project" value="InterPro"/>
</dbReference>
<dbReference type="FunFam" id="3.40.50.1370:FF:000011">
    <property type="entry name" value="Aspartate carbamoyltransferase"/>
    <property type="match status" value="1"/>
</dbReference>
<dbReference type="Gene3D" id="3.40.50.1370">
    <property type="entry name" value="Aspartate/ornithine carbamoyltransferase"/>
    <property type="match status" value="2"/>
</dbReference>
<dbReference type="HAMAP" id="MF_00001">
    <property type="entry name" value="Asp_carb_tr"/>
    <property type="match status" value="1"/>
</dbReference>
<dbReference type="InterPro" id="IPR006132">
    <property type="entry name" value="Asp/Orn_carbamoyltranf_P-bd"/>
</dbReference>
<dbReference type="InterPro" id="IPR006130">
    <property type="entry name" value="Asp/Orn_carbamoylTrfase"/>
</dbReference>
<dbReference type="InterPro" id="IPR036901">
    <property type="entry name" value="Asp/Orn_carbamoylTrfase_sf"/>
</dbReference>
<dbReference type="InterPro" id="IPR002082">
    <property type="entry name" value="Asp_carbamoyltransf"/>
</dbReference>
<dbReference type="InterPro" id="IPR006131">
    <property type="entry name" value="Asp_carbamoyltransf_Asp/Orn-bd"/>
</dbReference>
<dbReference type="NCBIfam" id="TIGR00670">
    <property type="entry name" value="asp_carb_tr"/>
    <property type="match status" value="1"/>
</dbReference>
<dbReference type="NCBIfam" id="NF002032">
    <property type="entry name" value="PRK00856.1"/>
    <property type="match status" value="1"/>
</dbReference>
<dbReference type="PANTHER" id="PTHR45753:SF6">
    <property type="entry name" value="ASPARTATE CARBAMOYLTRANSFERASE"/>
    <property type="match status" value="1"/>
</dbReference>
<dbReference type="PANTHER" id="PTHR45753">
    <property type="entry name" value="ORNITHINE CARBAMOYLTRANSFERASE, MITOCHONDRIAL"/>
    <property type="match status" value="1"/>
</dbReference>
<dbReference type="Pfam" id="PF00185">
    <property type="entry name" value="OTCace"/>
    <property type="match status" value="1"/>
</dbReference>
<dbReference type="Pfam" id="PF02729">
    <property type="entry name" value="OTCace_N"/>
    <property type="match status" value="1"/>
</dbReference>
<dbReference type="PRINTS" id="PR00100">
    <property type="entry name" value="AOTCASE"/>
</dbReference>
<dbReference type="PRINTS" id="PR00101">
    <property type="entry name" value="ATCASE"/>
</dbReference>
<dbReference type="SUPFAM" id="SSF53671">
    <property type="entry name" value="Aspartate/ornithine carbamoyltransferase"/>
    <property type="match status" value="1"/>
</dbReference>
<dbReference type="PROSITE" id="PS00097">
    <property type="entry name" value="CARBAMOYLTRANSFERASE"/>
    <property type="match status" value="1"/>
</dbReference>